<reference key="1">
    <citation type="journal article" date="2009" name="Appl. Environ. Microbiol.">
        <title>Genomic analysis of 'Elusimicrobium minutum,' the first cultivated representative of the phylum 'Elusimicrobia' (formerly termite group 1).</title>
        <authorList>
            <person name="Herlemann D.P.R."/>
            <person name="Geissinger O."/>
            <person name="Ikeda-Ohtsubo W."/>
            <person name="Kunin V."/>
            <person name="Sun H."/>
            <person name="Lapidus A."/>
            <person name="Hugenholtz P."/>
            <person name="Brune A."/>
        </authorList>
    </citation>
    <scope>NUCLEOTIDE SEQUENCE [LARGE SCALE GENOMIC DNA]</scope>
    <source>
        <strain>Pei191</strain>
    </source>
</reference>
<sequence length="176" mass="19873">MAVRRIVKYGEDILRQKLKPVDFKTLEPQLDAILQDMHDTCMSFQGAGLSANQIGLTHRIAMIFIPEKTPKGEAQKFKRYVVINPVIVSKKGCVTDEEGCLSLPGLWVEIERAESIVVHCLNEKGLPVEIHAKGFLAKALQHEIDHLDGKIFIDHADPKLKPEIKKELKKLSKNWS</sequence>
<proteinExistence type="inferred from homology"/>
<protein>
    <recommendedName>
        <fullName evidence="1">Peptide deformylase</fullName>
        <shortName evidence="1">PDF</shortName>
        <ecNumber evidence="1">3.5.1.88</ecNumber>
    </recommendedName>
    <alternativeName>
        <fullName evidence="1">Polypeptide deformylase</fullName>
    </alternativeName>
</protein>
<feature type="chain" id="PRO_1000097309" description="Peptide deformylase">
    <location>
        <begin position="1"/>
        <end position="176"/>
    </location>
</feature>
<feature type="active site" evidence="1">
    <location>
        <position position="143"/>
    </location>
</feature>
<feature type="binding site" evidence="1">
    <location>
        <position position="100"/>
    </location>
    <ligand>
        <name>Fe cation</name>
        <dbReference type="ChEBI" id="CHEBI:24875"/>
    </ligand>
</feature>
<feature type="binding site" evidence="1">
    <location>
        <position position="142"/>
    </location>
    <ligand>
        <name>Fe cation</name>
        <dbReference type="ChEBI" id="CHEBI:24875"/>
    </ligand>
</feature>
<feature type="binding site" evidence="1">
    <location>
        <position position="146"/>
    </location>
    <ligand>
        <name>Fe cation</name>
        <dbReference type="ChEBI" id="CHEBI:24875"/>
    </ligand>
</feature>
<keyword id="KW-0378">Hydrolase</keyword>
<keyword id="KW-0408">Iron</keyword>
<keyword id="KW-0479">Metal-binding</keyword>
<keyword id="KW-0648">Protein biosynthesis</keyword>
<keyword id="KW-1185">Reference proteome</keyword>
<dbReference type="EC" id="3.5.1.88" evidence="1"/>
<dbReference type="EMBL" id="CP001055">
    <property type="protein sequence ID" value="ACC98461.1"/>
    <property type="molecule type" value="Genomic_DNA"/>
</dbReference>
<dbReference type="RefSeq" id="WP_012415076.1">
    <property type="nucleotide sequence ID" value="NC_010644.1"/>
</dbReference>
<dbReference type="SMR" id="B2KD65"/>
<dbReference type="STRING" id="445932.Emin_0906"/>
<dbReference type="KEGG" id="emi:Emin_0906"/>
<dbReference type="HOGENOM" id="CLU_061901_4_2_0"/>
<dbReference type="OrthoDB" id="9804313at2"/>
<dbReference type="Proteomes" id="UP000001029">
    <property type="component" value="Chromosome"/>
</dbReference>
<dbReference type="GO" id="GO:0046872">
    <property type="term" value="F:metal ion binding"/>
    <property type="evidence" value="ECO:0007669"/>
    <property type="project" value="UniProtKB-KW"/>
</dbReference>
<dbReference type="GO" id="GO:0042586">
    <property type="term" value="F:peptide deformylase activity"/>
    <property type="evidence" value="ECO:0007669"/>
    <property type="project" value="UniProtKB-UniRule"/>
</dbReference>
<dbReference type="GO" id="GO:0043686">
    <property type="term" value="P:co-translational protein modification"/>
    <property type="evidence" value="ECO:0007669"/>
    <property type="project" value="TreeGrafter"/>
</dbReference>
<dbReference type="GO" id="GO:0006412">
    <property type="term" value="P:translation"/>
    <property type="evidence" value="ECO:0007669"/>
    <property type="project" value="UniProtKB-UniRule"/>
</dbReference>
<dbReference type="CDD" id="cd00487">
    <property type="entry name" value="Pep_deformylase"/>
    <property type="match status" value="1"/>
</dbReference>
<dbReference type="Gene3D" id="3.90.45.10">
    <property type="entry name" value="Peptide deformylase"/>
    <property type="match status" value="1"/>
</dbReference>
<dbReference type="HAMAP" id="MF_00163">
    <property type="entry name" value="Pep_deformylase"/>
    <property type="match status" value="1"/>
</dbReference>
<dbReference type="InterPro" id="IPR023635">
    <property type="entry name" value="Peptide_deformylase"/>
</dbReference>
<dbReference type="InterPro" id="IPR036821">
    <property type="entry name" value="Peptide_deformylase_sf"/>
</dbReference>
<dbReference type="NCBIfam" id="TIGR00079">
    <property type="entry name" value="pept_deformyl"/>
    <property type="match status" value="1"/>
</dbReference>
<dbReference type="NCBIfam" id="NF001159">
    <property type="entry name" value="PRK00150.1-3"/>
    <property type="match status" value="1"/>
</dbReference>
<dbReference type="PANTHER" id="PTHR10458">
    <property type="entry name" value="PEPTIDE DEFORMYLASE"/>
    <property type="match status" value="1"/>
</dbReference>
<dbReference type="PANTHER" id="PTHR10458:SF22">
    <property type="entry name" value="PEPTIDE DEFORMYLASE"/>
    <property type="match status" value="1"/>
</dbReference>
<dbReference type="Pfam" id="PF01327">
    <property type="entry name" value="Pep_deformylase"/>
    <property type="match status" value="1"/>
</dbReference>
<dbReference type="PIRSF" id="PIRSF004749">
    <property type="entry name" value="Pep_def"/>
    <property type="match status" value="1"/>
</dbReference>
<dbReference type="PRINTS" id="PR01576">
    <property type="entry name" value="PDEFORMYLASE"/>
</dbReference>
<dbReference type="SUPFAM" id="SSF56420">
    <property type="entry name" value="Peptide deformylase"/>
    <property type="match status" value="1"/>
</dbReference>
<gene>
    <name evidence="1" type="primary">def</name>
    <name type="ordered locus">Emin_0906</name>
</gene>
<accession>B2KD65</accession>
<name>DEF_ELUMP</name>
<evidence type="ECO:0000255" key="1">
    <source>
        <dbReference type="HAMAP-Rule" id="MF_00163"/>
    </source>
</evidence>
<comment type="function">
    <text evidence="1">Removes the formyl group from the N-terminal Met of newly synthesized proteins. Requires at least a dipeptide for an efficient rate of reaction. N-terminal L-methionine is a prerequisite for activity but the enzyme has broad specificity at other positions.</text>
</comment>
<comment type="catalytic activity">
    <reaction evidence="1">
        <text>N-terminal N-formyl-L-methionyl-[peptide] + H2O = N-terminal L-methionyl-[peptide] + formate</text>
        <dbReference type="Rhea" id="RHEA:24420"/>
        <dbReference type="Rhea" id="RHEA-COMP:10639"/>
        <dbReference type="Rhea" id="RHEA-COMP:10640"/>
        <dbReference type="ChEBI" id="CHEBI:15377"/>
        <dbReference type="ChEBI" id="CHEBI:15740"/>
        <dbReference type="ChEBI" id="CHEBI:49298"/>
        <dbReference type="ChEBI" id="CHEBI:64731"/>
        <dbReference type="EC" id="3.5.1.88"/>
    </reaction>
</comment>
<comment type="cofactor">
    <cofactor evidence="1">
        <name>Fe(2+)</name>
        <dbReference type="ChEBI" id="CHEBI:29033"/>
    </cofactor>
    <text evidence="1">Binds 1 Fe(2+) ion.</text>
</comment>
<comment type="similarity">
    <text evidence="1">Belongs to the polypeptide deformylase family.</text>
</comment>
<organism>
    <name type="scientific">Elusimicrobium minutum (strain Pei191)</name>
    <dbReference type="NCBI Taxonomy" id="445932"/>
    <lineage>
        <taxon>Bacteria</taxon>
        <taxon>Pseudomonadati</taxon>
        <taxon>Elusimicrobiota</taxon>
        <taxon>Elusimicrobia</taxon>
        <taxon>Elusimicrobiales</taxon>
        <taxon>Elusimicrobiaceae</taxon>
        <taxon>Elusimicrobium</taxon>
    </lineage>
</organism>